<protein>
    <recommendedName>
        <fullName>Armadillo repeat-containing protein 8</fullName>
    </recommendedName>
</protein>
<feature type="initiator methionine" description="Removed" evidence="1">
    <location>
        <position position="1"/>
    </location>
</feature>
<feature type="chain" id="PRO_0000284411" description="Armadillo repeat-containing protein 8">
    <location>
        <begin position="2"/>
        <end position="673"/>
    </location>
</feature>
<feature type="repeat" description="ARM 1">
    <location>
        <begin position="51"/>
        <end position="92"/>
    </location>
</feature>
<feature type="repeat" description="ARM 2">
    <location>
        <begin position="95"/>
        <end position="134"/>
    </location>
</feature>
<feature type="repeat" description="ARM 3">
    <location>
        <begin position="138"/>
        <end position="176"/>
    </location>
</feature>
<feature type="repeat" description="ARM 4">
    <location>
        <begin position="178"/>
        <end position="217"/>
    </location>
</feature>
<feature type="repeat" description="ARM 5">
    <location>
        <begin position="224"/>
        <end position="265"/>
    </location>
</feature>
<feature type="repeat" description="ARM 6">
    <location>
        <begin position="269"/>
        <end position="309"/>
    </location>
</feature>
<feature type="repeat" description="ARM 7">
    <location>
        <begin position="313"/>
        <end position="352"/>
    </location>
</feature>
<feature type="repeat" description="ARM 8">
    <location>
        <begin position="374"/>
        <end position="413"/>
    </location>
</feature>
<feature type="repeat" description="ARM 9">
    <location>
        <begin position="416"/>
        <end position="455"/>
    </location>
</feature>
<feature type="repeat" description="ARM 10">
    <location>
        <begin position="458"/>
        <end position="497"/>
    </location>
</feature>
<feature type="repeat" description="ARM 11">
    <location>
        <begin position="501"/>
        <end position="540"/>
    </location>
</feature>
<feature type="repeat" description="ARM 12">
    <location>
        <begin position="543"/>
        <end position="585"/>
    </location>
</feature>
<feature type="repeat" description="ARM 13">
    <location>
        <begin position="588"/>
        <end position="627"/>
    </location>
</feature>
<feature type="repeat" description="ARM 14">
    <location>
        <begin position="634"/>
        <end position="673"/>
    </location>
</feature>
<feature type="modified residue" description="N-acetylalanine" evidence="1">
    <location>
        <position position="2"/>
    </location>
</feature>
<feature type="modified residue" description="Phosphoserine" evidence="1">
    <location>
        <position position="337"/>
    </location>
</feature>
<feature type="modified residue" description="Phosphoserine" evidence="1">
    <location>
        <position position="512"/>
    </location>
</feature>
<dbReference type="EMBL" id="CR860412">
    <property type="protein sequence ID" value="CAH92537.1"/>
    <property type="molecule type" value="mRNA"/>
</dbReference>
<dbReference type="RefSeq" id="NP_001126485.1">
    <property type="nucleotide sequence ID" value="NM_001133013.1"/>
</dbReference>
<dbReference type="SMR" id="Q5R6S3"/>
<dbReference type="FunCoup" id="Q5R6S3">
    <property type="interactions" value="3175"/>
</dbReference>
<dbReference type="STRING" id="9601.ENSPPYP00000015819"/>
<dbReference type="GeneID" id="100173472"/>
<dbReference type="KEGG" id="pon:100173472"/>
<dbReference type="CTD" id="25852"/>
<dbReference type="eggNOG" id="KOG1293">
    <property type="taxonomic scope" value="Eukaryota"/>
</dbReference>
<dbReference type="InParanoid" id="Q5R6S3"/>
<dbReference type="OrthoDB" id="5559898at2759"/>
<dbReference type="Proteomes" id="UP000001595">
    <property type="component" value="Unplaced"/>
</dbReference>
<dbReference type="GO" id="GO:0005737">
    <property type="term" value="C:cytoplasm"/>
    <property type="evidence" value="ECO:0000250"/>
    <property type="project" value="UniProtKB"/>
</dbReference>
<dbReference type="GO" id="GO:0034657">
    <property type="term" value="C:GID complex"/>
    <property type="evidence" value="ECO:0007669"/>
    <property type="project" value="TreeGrafter"/>
</dbReference>
<dbReference type="GO" id="GO:0005634">
    <property type="term" value="C:nucleus"/>
    <property type="evidence" value="ECO:0000250"/>
    <property type="project" value="UniProtKB"/>
</dbReference>
<dbReference type="GO" id="GO:0000151">
    <property type="term" value="C:ubiquitin ligase complex"/>
    <property type="evidence" value="ECO:0000250"/>
    <property type="project" value="UniProtKB"/>
</dbReference>
<dbReference type="GO" id="GO:0043161">
    <property type="term" value="P:proteasome-mediated ubiquitin-dependent protein catabolic process"/>
    <property type="evidence" value="ECO:0007669"/>
    <property type="project" value="TreeGrafter"/>
</dbReference>
<dbReference type="FunFam" id="1.25.10.10:FF:000061">
    <property type="entry name" value="armadillo repeat-containing protein 8 isoform X1"/>
    <property type="match status" value="1"/>
</dbReference>
<dbReference type="FunFam" id="1.25.10.10:FF:000070">
    <property type="entry name" value="armadillo repeat-containing protein 8 isoform X1"/>
    <property type="match status" value="1"/>
</dbReference>
<dbReference type="Gene3D" id="1.25.10.10">
    <property type="entry name" value="Leucine-rich Repeat Variant"/>
    <property type="match status" value="2"/>
</dbReference>
<dbReference type="InterPro" id="IPR011989">
    <property type="entry name" value="ARM-like"/>
</dbReference>
<dbReference type="InterPro" id="IPR016024">
    <property type="entry name" value="ARM-type_fold"/>
</dbReference>
<dbReference type="InterPro" id="IPR000225">
    <property type="entry name" value="Armadillo"/>
</dbReference>
<dbReference type="InterPro" id="IPR038739">
    <property type="entry name" value="ARMC8/Vid28"/>
</dbReference>
<dbReference type="PANTHER" id="PTHR15651">
    <property type="entry name" value="ARMADILLO REPEAT-CONTAINING PROTEIN 8"/>
    <property type="match status" value="1"/>
</dbReference>
<dbReference type="PANTHER" id="PTHR15651:SF7">
    <property type="entry name" value="ARMADILLO REPEAT-CONTAINING PROTEIN 8"/>
    <property type="match status" value="1"/>
</dbReference>
<dbReference type="Pfam" id="PF00514">
    <property type="entry name" value="Arm"/>
    <property type="match status" value="1"/>
</dbReference>
<dbReference type="SMART" id="SM00185">
    <property type="entry name" value="ARM"/>
    <property type="match status" value="9"/>
</dbReference>
<dbReference type="SUPFAM" id="SSF48371">
    <property type="entry name" value="ARM repeat"/>
    <property type="match status" value="1"/>
</dbReference>
<dbReference type="PROSITE" id="PS50176">
    <property type="entry name" value="ARM_REPEAT"/>
    <property type="match status" value="1"/>
</dbReference>
<name>ARMC8_PONAB</name>
<evidence type="ECO:0000250" key="1">
    <source>
        <dbReference type="UniProtKB" id="Q8IUR7"/>
    </source>
</evidence>
<keyword id="KW-0007">Acetylation</keyword>
<keyword id="KW-0963">Cytoplasm</keyword>
<keyword id="KW-0539">Nucleus</keyword>
<keyword id="KW-0597">Phosphoprotein</keyword>
<keyword id="KW-1185">Reference proteome</keyword>
<keyword id="KW-0677">Repeat</keyword>
<gene>
    <name type="primary">ARMC8</name>
</gene>
<comment type="function">
    <text evidence="1">Component of the CTLH E3 ubiquitin-protein ligase complex that selectively accepts ubiquitin from UBE2H and mediates ubiquitination and subsequent proteasomal degradation of the transcription factor HBP1.</text>
</comment>
<comment type="subunit">
    <text evidence="1">Identified in the CTLH complex that contains GID4, RANBP9 and/or RANBP10, MKLN1, MAEA, RMND5A (or alternatively its paralog RMND5B), GID8, ARMC8, WDR26 and YPEL5. Within this complex, MAEA, RMND5A (or alternatively its paralog RMND5B), GID8, WDR26, and RANBP9 and/or RANBP10 form the catalytic core, while GID4, MKLN1, ARMC8 and YPEL5 have ancillary roles.</text>
</comment>
<comment type="subcellular location">
    <subcellularLocation>
        <location evidence="1">Nucleus</location>
    </subcellularLocation>
    <subcellularLocation>
        <location evidence="1">Cytoplasm</location>
    </subcellularLocation>
</comment>
<sequence length="673" mass="75463">MACLLETPIRMSVLSEVTASSRHYVDRLFDPDPQKVLQGVIDMKNAVIGNNKQKANLIVLGAVPRLLYLLQQETSSTELKTECAVVLGSLAMGTENNVKSLLDCHIIPALLQGLLSPDLKFIEACLRCPRTIFTSPVTPEELLYTDATVIPHLMALLSRSRYTQEYICQIFSHCCKGPDHQTILFNHGAVQNIAHLLTSLSYKVRMQALKCFSVLAFENPQVSMTLVNVLVDGELLPQIFVKMLQRDKPIEMQLTSAKCLTYMCRAGAIRTDDNCIVLKTLPCLVRMCSKERLLEERVEGAETLAYLIEPDVELQRIASITDHLIAMLADYFKYPSSVSAITDIKRLDHDLKHAHELRQAAFKLYASLGANDEDIRKKIIETENMMDRIVTGLSESSVKVRLAAVRCLHSLSRSVQQLRTSFQDHAVWKPLMKVLQNAPDEILVVASSMLCNLLLEFSPSKEPILESGAVELLCGLTQSENPALRVNGIWALMNTAFQAEQKIKADILRSLSTEQLFRLLSDSDLNVLMKTLGLLRNLLSTRPHIDKIMSTHGKQIMQAVTLILEGEHNIEVKEQTLCILANIADGTTAKDLIMTNDDILQKIKYYMGHSHVKLQLAAMFCISNLIWNEEEGSQERQDKLRDMGIVDILHKLSQSPDSNLCDKAKMALQQYLA</sequence>
<accession>Q5R6S3</accession>
<organism>
    <name type="scientific">Pongo abelii</name>
    <name type="common">Sumatran orangutan</name>
    <name type="synonym">Pongo pygmaeus abelii</name>
    <dbReference type="NCBI Taxonomy" id="9601"/>
    <lineage>
        <taxon>Eukaryota</taxon>
        <taxon>Metazoa</taxon>
        <taxon>Chordata</taxon>
        <taxon>Craniata</taxon>
        <taxon>Vertebrata</taxon>
        <taxon>Euteleostomi</taxon>
        <taxon>Mammalia</taxon>
        <taxon>Eutheria</taxon>
        <taxon>Euarchontoglires</taxon>
        <taxon>Primates</taxon>
        <taxon>Haplorrhini</taxon>
        <taxon>Catarrhini</taxon>
        <taxon>Hominidae</taxon>
        <taxon>Pongo</taxon>
    </lineage>
</organism>
<reference key="1">
    <citation type="submission" date="2004-11" db="EMBL/GenBank/DDBJ databases">
        <authorList>
            <consortium name="The German cDNA consortium"/>
        </authorList>
    </citation>
    <scope>NUCLEOTIDE SEQUENCE [LARGE SCALE MRNA]</scope>
    <source>
        <tissue>Brain cortex</tissue>
    </source>
</reference>
<proteinExistence type="evidence at transcript level"/>